<proteinExistence type="evidence at protein level"/>
<gene>
    <name type="primary">uvrB</name>
    <name type="ordered locus">b0779</name>
    <name type="ordered locus">JW0762</name>
</gene>
<evidence type="ECO:0000255" key="1"/>
<evidence type="ECO:0000256" key="2">
    <source>
        <dbReference type="SAM" id="MobiDB-lite"/>
    </source>
</evidence>
<evidence type="ECO:0000269" key="3">
    <source>
    </source>
</evidence>
<evidence type="ECO:0000269" key="4">
    <source>
    </source>
</evidence>
<evidence type="ECO:0000269" key="5">
    <source>
    </source>
</evidence>
<evidence type="ECO:0000269" key="6">
    <source>
    </source>
</evidence>
<evidence type="ECO:0000305" key="7"/>
<evidence type="ECO:0007829" key="8">
    <source>
        <dbReference type="PDB" id="1QOJ"/>
    </source>
</evidence>
<comment type="function">
    <text evidence="4">The UvrABC repair system catalyzes the recognition and processing of DNA lesions. A damage recognition complex composed of 2 UvrA and 2 UvrB subunits scans DNA for abnormalities. Upon binding of the UvrA(2)B(2) complex to a putative damaged site, the DNA wraps around one UvrB monomer. DNA wrap is dependent on ATP binding by UvrB and probably causes local melting of the DNA helix, facilitating insertion of UvrB beta-hairpin between the DNA strands. Then UvrB probes one DNA strand for the presence of a lesion. If a lesion is found the UvrA subunits dissociate and the UvrB-DNA preincision complex is formed. This complex is subsequently bound by UvrC and the second UvrB is released. If no lesion is found, the DNA wraps around the other UvrB subunit that will check the other stand for damage.</text>
</comment>
<comment type="subunit">
    <text>Forms a heterotetramer with UvrA during the search for lesions. Interacts with UvrC in an incision complex.</text>
</comment>
<comment type="interaction">
    <interactant intactId="EBI-552176">
        <id>P0A8F8</id>
    </interactant>
    <interactant intactId="EBI-552553">
        <id>P0AFY8</id>
        <label>seqA</label>
    </interactant>
    <organismsDiffer>false</organismsDiffer>
    <experiments>2</experiments>
</comment>
<comment type="interaction">
    <interactant intactId="EBI-552176">
        <id>P0A8F8</id>
    </interactant>
    <interactant intactId="EBI-1120497">
        <id>P76373</id>
        <label>ugd</label>
    </interactant>
    <organismsDiffer>false</organismsDiffer>
    <experiments>2</experiments>
</comment>
<comment type="interaction">
    <interactant intactId="EBI-552176">
        <id>P0A8F8</id>
    </interactant>
    <interactant intactId="EBI-552091">
        <id>P0A698</id>
        <label>uvrA</label>
    </interactant>
    <organismsDiffer>false</organismsDiffer>
    <experiments>7</experiments>
</comment>
<comment type="interaction">
    <interactant intactId="EBI-552176">
        <id>P0A8F8</id>
    </interactant>
    <interactant intactId="EBI-552176">
        <id>P0A8F8</id>
        <label>uvrB</label>
    </interactant>
    <organismsDiffer>false</organismsDiffer>
    <experiments>3</experiments>
</comment>
<comment type="subcellular location">
    <subcellularLocation>
        <location>Cytoplasm</location>
    </subcellularLocation>
</comment>
<comment type="induction">
    <text evidence="5">Induced 1.5-fold by hydroxyurea.</text>
</comment>
<comment type="domain">
    <text>The beta-hairpin motif is involved in DNA binding.</text>
</comment>
<comment type="miscellaneous">
    <text>According to PubMed:3515321, a cleaved form of the protein was observed that resulted from the removal of about 40 amino acids from the C-terminus of the protein. The exact cleavage site being unknown, it was proposed to be between Lys-630 and Ala-631. There was no indication that cleavage occured in vivo and therefore it is not known if it has any physiological significance.</text>
</comment>
<comment type="similarity">
    <text evidence="7">Belongs to the UvrB family.</text>
</comment>
<reference key="1">
    <citation type="journal article" date="1986" name="Nucleic Acids Res.">
        <title>Sequences of the E. coli uvrB gene and protein.</title>
        <authorList>
            <person name="Arikan E."/>
            <person name="Kulkarni M.S."/>
            <person name="Thomas D.C."/>
            <person name="Sancar A."/>
        </authorList>
    </citation>
    <scope>NUCLEOTIDE SEQUENCE [GENOMIC DNA]</scope>
    <scope>PROTEIN SEQUENCE OF 2-8</scope>
    <scope>PROTEOLYTIC PRODUCT</scope>
    <source>
        <strain>K12</strain>
    </source>
</reference>
<reference key="2">
    <citation type="journal article" date="1986" name="Nucleic Acids Res.">
        <title>Structure of the uvrB gene of Escherichia coli. Homology with other DNA repair enzymes and characterization of the uvrB5 mutation.</title>
        <authorList>
            <person name="Backendorf C."/>
            <person name="Spaik H."/>
            <person name="Barbeiro A.P."/>
            <person name="van de Putte P."/>
        </authorList>
    </citation>
    <scope>NUCLEOTIDE SEQUENCE [GENOMIC DNA]</scope>
</reference>
<reference key="3">
    <citation type="journal article" date="1997" name="Science">
        <title>The complete genome sequence of Escherichia coli K-12.</title>
        <authorList>
            <person name="Blattner F.R."/>
            <person name="Plunkett G. III"/>
            <person name="Bloch C.A."/>
            <person name="Perna N.T."/>
            <person name="Burland V."/>
            <person name="Riley M."/>
            <person name="Collado-Vides J."/>
            <person name="Glasner J.D."/>
            <person name="Rode C.K."/>
            <person name="Mayhew G.F."/>
            <person name="Gregor J."/>
            <person name="Davis N.W."/>
            <person name="Kirkpatrick H.A."/>
            <person name="Goeden M.A."/>
            <person name="Rose D.J."/>
            <person name="Mau B."/>
            <person name="Shao Y."/>
        </authorList>
    </citation>
    <scope>NUCLEOTIDE SEQUENCE [LARGE SCALE GENOMIC DNA]</scope>
    <source>
        <strain>K12 / MG1655 / ATCC 47076</strain>
    </source>
</reference>
<reference key="4">
    <citation type="journal article" date="2006" name="Mol. Syst. Biol.">
        <title>Highly accurate genome sequences of Escherichia coli K-12 strains MG1655 and W3110.</title>
        <authorList>
            <person name="Hayashi K."/>
            <person name="Morooka N."/>
            <person name="Yamamoto Y."/>
            <person name="Fujita K."/>
            <person name="Isono K."/>
            <person name="Choi S."/>
            <person name="Ohtsubo E."/>
            <person name="Baba T."/>
            <person name="Wanner B.L."/>
            <person name="Mori H."/>
            <person name="Horiuchi T."/>
        </authorList>
    </citation>
    <scope>NUCLEOTIDE SEQUENCE [LARGE SCALE GENOMIC DNA]</scope>
    <source>
        <strain>K12 / W3110 / ATCC 27325 / DSM 5911</strain>
    </source>
</reference>
<reference key="5">
    <citation type="journal article" date="1996" name="DNA Res.">
        <title>A 718-kb DNA sequence of the Escherichia coli K-12 genome corresponding to the 12.7-28.0 min region on the linkage map.</title>
        <authorList>
            <person name="Oshima T."/>
            <person name="Aiba H."/>
            <person name="Baba T."/>
            <person name="Fujita K."/>
            <person name="Hayashi K."/>
            <person name="Honjo A."/>
            <person name="Ikemoto K."/>
            <person name="Inada T."/>
            <person name="Itoh T."/>
            <person name="Kajihara M."/>
            <person name="Kanai K."/>
            <person name="Kashimoto K."/>
            <person name="Kimura S."/>
            <person name="Kitagawa M."/>
            <person name="Makino K."/>
            <person name="Masuda S."/>
            <person name="Miki T."/>
            <person name="Mizobuchi K."/>
            <person name="Mori H."/>
            <person name="Motomura K."/>
            <person name="Nakamura Y."/>
            <person name="Nashimoto H."/>
            <person name="Nishio Y."/>
            <person name="Saito N."/>
            <person name="Sampei G."/>
            <person name="Seki Y."/>
            <person name="Tagami H."/>
            <person name="Takemoto K."/>
            <person name="Wada C."/>
            <person name="Yamamoto Y."/>
            <person name="Yano M."/>
            <person name="Horiuchi T."/>
        </authorList>
    </citation>
    <scope>NUCLEOTIDE SEQUENCE [LARGE SCALE GENOMIC DNA] OF 168-673</scope>
    <source>
        <strain>K12 / W3110 / ATCC 27325 / DSM 5911</strain>
    </source>
</reference>
<reference key="6">
    <citation type="journal article" date="1997" name="Electrophoresis">
        <title>Escherichia coli proteome analysis using the gene-protein database.</title>
        <authorList>
            <person name="VanBogelen R.A."/>
            <person name="Abshire K.Z."/>
            <person name="Moldover B."/>
            <person name="Olson E.R."/>
            <person name="Neidhardt F.C."/>
        </authorList>
    </citation>
    <scope>IDENTIFICATION BY 2D-GEL</scope>
</reference>
<reference key="7">
    <citation type="journal article" date="2002" name="EMBO J.">
        <title>The presence of two UvrB subunits in the UvrAB complex ensures damage detection in both DNA strands.</title>
        <authorList>
            <person name="Verhoeven E.E."/>
            <person name="Wyman C."/>
            <person name="Moolenaar G.F."/>
            <person name="Goosen N."/>
        </authorList>
    </citation>
    <scope>FUNCTION</scope>
    <scope>DIMERIC STATE OF UVRB</scope>
</reference>
<reference key="8">
    <citation type="journal article" date="2009" name="Mol. Cell">
        <title>Hydroxyurea induces hydroxyl radical-mediated cell death in Escherichia coli.</title>
        <authorList>
            <person name="Davies B.W."/>
            <person name="Kohanski M.A."/>
            <person name="Simmons L.A."/>
            <person name="Winkler J.A."/>
            <person name="Collins J.J."/>
            <person name="Walker G.C."/>
        </authorList>
    </citation>
    <scope>INDUCTION BY HYDROXYUREA</scope>
    <source>
        <strain>K12 / MC4100 / ATCC 35695 / DSM 6574</strain>
    </source>
</reference>
<reference key="9">
    <citation type="journal article" date="2000" name="FEBS Lett.">
        <title>Crystal structure of Escherichia coli UvrB C-terminal domain, and a model for UvrB-uvrC interaction.</title>
        <authorList>
            <person name="Sohi M."/>
            <person name="Alexandrovich A."/>
            <person name="Moolenaar G."/>
            <person name="Visse R."/>
            <person name="Goosen N."/>
            <person name="Vernede X."/>
            <person name="Fontecilla-Camps J.-C."/>
            <person name="Champness J."/>
            <person name="Sanderson M.R."/>
        </authorList>
    </citation>
    <scope>X-RAY CRYSTALLOGRAPHY (3.0 ANGSTROMS) OF 619-673</scope>
</reference>
<reference key="10">
    <citation type="journal article" date="1999" name="FEBS Lett.">
        <title>NMR assignments and secondary structure of the UvrC binding domain of UvrB.</title>
        <authorList>
            <person name="Alexandrovich A."/>
            <person name="Sanderson M.R."/>
            <person name="Moolenaar G.F."/>
            <person name="Goosen N."/>
            <person name="Lane A.N."/>
        </authorList>
    </citation>
    <scope>STRUCTURE BY NMR OF 619-673</scope>
</reference>
<reference key="11">
    <citation type="journal article" date="2001" name="EMBO J.">
        <title>Clue to damage recognition by UvrB: residues in the beta-hairpin structure prevent binding to non-damaged DNA.</title>
        <authorList>
            <person name="Moolenaar G.F."/>
            <person name="Hoeglund L."/>
            <person name="Goosen N."/>
        </authorList>
    </citation>
    <scope>MUTAGENESIS OF 95-TYR-TYR-96; TYR-101 AND PHE-108</scope>
</reference>
<feature type="initiator methionine" description="Removed" evidence="6">
    <location>
        <position position="1"/>
    </location>
</feature>
<feature type="chain" id="PRO_0000138390" description="UvrABC system protein B">
    <location>
        <begin position="2"/>
        <end position="673"/>
    </location>
</feature>
<feature type="domain" description="Helicase ATP-binding">
    <location>
        <begin position="26"/>
        <end position="415"/>
    </location>
</feature>
<feature type="domain" description="Helicase C-terminal">
    <location>
        <begin position="431"/>
        <end position="597"/>
    </location>
</feature>
<feature type="domain" description="UVR">
    <location>
        <begin position="633"/>
        <end position="668"/>
    </location>
</feature>
<feature type="region of interest" description="Disordered" evidence="2">
    <location>
        <begin position="608"/>
        <end position="627"/>
    </location>
</feature>
<feature type="short sequence motif" description="Beta-hairpin">
    <location>
        <begin position="92"/>
        <end position="115"/>
    </location>
</feature>
<feature type="binding site" evidence="1">
    <location>
        <begin position="39"/>
        <end position="46"/>
    </location>
    <ligand>
        <name>ATP</name>
        <dbReference type="ChEBI" id="CHEBI:30616"/>
    </ligand>
</feature>
<feature type="site" description="Cleavage" evidence="1">
    <location>
        <begin position="630"/>
        <end position="631"/>
    </location>
</feature>
<feature type="mutagenesis site" description="Defective in DNA-unwinding activity." evidence="3">
    <original>YY</original>
    <variation>AA</variation>
    <location>
        <begin position="95"/>
        <end position="96"/>
    </location>
</feature>
<feature type="mutagenesis site" description="Defective in DNA-unwinding activity; when associated with A-108." evidence="3">
    <original>Y</original>
    <variation>A</variation>
    <location>
        <position position="101"/>
    </location>
</feature>
<feature type="mutagenesis site" description="Defective in DNA-unwinding activity; when associated with A-101." evidence="3">
    <original>F</original>
    <variation>A</variation>
    <location>
        <position position="108"/>
    </location>
</feature>
<feature type="sequence conflict" description="In Ref. 1; CAA27314." evidence="7" ref="1">
    <original>H</original>
    <variation>R</variation>
    <location>
        <position position="477"/>
    </location>
</feature>
<feature type="helix" evidence="8">
    <location>
        <begin position="629"/>
        <end position="648"/>
    </location>
</feature>
<feature type="helix" evidence="8">
    <location>
        <begin position="654"/>
        <end position="671"/>
    </location>
</feature>
<accession>P0A8F8</accession>
<accession>P07025</accession>
<name>UVRB_ECOLI</name>
<sequence length="673" mass="76226">MSKPFKLNSAFKPSGDQPEAIRRLEEGLEDGLAHQTLLGVTGSGKTFTIANVIADLQRPTMVLAPNKTLAAQLYGEMKEFFPENAVEYFVSYYDYYQPEAYVPSSDTFIEKDASVNEHIEQMRLSATKAMLERRDVVVVASVSAIYGLGDPDLYLKMMLHLTVGMIIDQRAILRRLAELQYARNDQAFQRGTFRVRGEVIDIFPAESDDIALRVELFDEEVERLSLFDPLTGQIVSTIPRFTIYPKTHYVTPRERIVQAMEEIKEELAARRKVLLENNKLLEEQRLTQRTQFDLEMMNELGYCSGIENYSRFLSGRGPGEPPPTLFDYLPADGLLVVDESHVTIPQIGGMYRGDRARKETLVEYGFRLPSALDNRPLKFEEFEALAPQTIYVSATPGNYELEKSGGDVVDQVVRPTGLLDPIIEVRPVATQVDDLLSEIRQRAAINERVLVTTLTKRMAEDLTEYLEEHGERVRYLHSDIDTVERMEIIRDLRLGEFDVLVGINLLREGLDMPEVSLVAILDADKEGFLRSERSLIQTIGRAARNVNGKAILYGDKITPSMAKAIGETERRREKQQKYNEEHGITPQGLNKKVVDILALGQNIAKTKAKGRGKSRPIVEPDNVPMDMSPKALQQKIHELEGLMMQHAQNLEFEEAAQIRDQLHQLRELFIAAS</sequence>
<protein>
    <recommendedName>
        <fullName>UvrABC system protein B</fullName>
        <shortName>Protein UvrB</shortName>
    </recommendedName>
    <alternativeName>
        <fullName>Excinuclease ABC subunit B</fullName>
    </alternativeName>
</protein>
<dbReference type="EMBL" id="X03678">
    <property type="protein sequence ID" value="CAA27314.1"/>
    <property type="molecule type" value="Genomic_DNA"/>
</dbReference>
<dbReference type="EMBL" id="X03722">
    <property type="protein sequence ID" value="CAA27357.1"/>
    <property type="molecule type" value="Genomic_DNA"/>
</dbReference>
<dbReference type="EMBL" id="U00096">
    <property type="protein sequence ID" value="AAC73866.1"/>
    <property type="molecule type" value="Genomic_DNA"/>
</dbReference>
<dbReference type="EMBL" id="AP009048">
    <property type="protein sequence ID" value="BAA35437.2"/>
    <property type="molecule type" value="Genomic_DNA"/>
</dbReference>
<dbReference type="PIR" id="A93613">
    <property type="entry name" value="BVECUB"/>
</dbReference>
<dbReference type="RefSeq" id="NP_415300.1">
    <property type="nucleotide sequence ID" value="NC_000913.3"/>
</dbReference>
<dbReference type="RefSeq" id="WP_000042533.1">
    <property type="nucleotide sequence ID" value="NZ_STEB01000028.1"/>
</dbReference>
<dbReference type="PDB" id="1E52">
    <property type="method" value="NMR"/>
    <property type="chains" value="A/B=619-673"/>
</dbReference>
<dbReference type="PDB" id="1QOJ">
    <property type="method" value="X-ray"/>
    <property type="resolution" value="3.00 A"/>
    <property type="chains" value="A/B=619-673"/>
</dbReference>
<dbReference type="PDBsum" id="1E52"/>
<dbReference type="PDBsum" id="1QOJ"/>
<dbReference type="SMR" id="P0A8F8"/>
<dbReference type="BioGRID" id="4259957">
    <property type="interactions" value="141"/>
</dbReference>
<dbReference type="BioGRID" id="849761">
    <property type="interactions" value="19"/>
</dbReference>
<dbReference type="ComplexPortal" id="CPX-2151">
    <property type="entry name" value="UvrAB DNA damage sensor complex"/>
</dbReference>
<dbReference type="ComplexPortal" id="CPX-2152">
    <property type="entry name" value="UvrB pre-incision complex"/>
</dbReference>
<dbReference type="ComplexPortal" id="CPX-2153">
    <property type="entry name" value="UvrBC excinuclease repair complex"/>
</dbReference>
<dbReference type="DIP" id="DIP-48012N"/>
<dbReference type="FunCoup" id="P0A8F8">
    <property type="interactions" value="225"/>
</dbReference>
<dbReference type="IntAct" id="P0A8F8">
    <property type="interactions" value="32"/>
</dbReference>
<dbReference type="STRING" id="511145.b0779"/>
<dbReference type="jPOST" id="P0A8F8"/>
<dbReference type="PaxDb" id="511145-b0779"/>
<dbReference type="EnsemblBacteria" id="AAC73866">
    <property type="protein sequence ID" value="AAC73866"/>
    <property type="gene ID" value="b0779"/>
</dbReference>
<dbReference type="GeneID" id="93776651"/>
<dbReference type="GeneID" id="945385"/>
<dbReference type="KEGG" id="ecj:JW0762"/>
<dbReference type="KEGG" id="eco:b0779"/>
<dbReference type="KEGG" id="ecoc:C3026_04945"/>
<dbReference type="PATRIC" id="fig|1411691.4.peg.1499"/>
<dbReference type="EchoBASE" id="EB1055"/>
<dbReference type="eggNOG" id="COG0556">
    <property type="taxonomic scope" value="Bacteria"/>
</dbReference>
<dbReference type="HOGENOM" id="CLU_009621_2_1_6"/>
<dbReference type="InParanoid" id="P0A8F8"/>
<dbReference type="OMA" id="RYMHSEI"/>
<dbReference type="OrthoDB" id="9806651at2"/>
<dbReference type="PhylomeDB" id="P0A8F8"/>
<dbReference type="BioCyc" id="EcoCyc:EG11062-MONOMER"/>
<dbReference type="BioCyc" id="MetaCyc:EG11062-MONOMER"/>
<dbReference type="EvolutionaryTrace" id="P0A8F8"/>
<dbReference type="PRO" id="PR:P0A8F8"/>
<dbReference type="Proteomes" id="UP000000625">
    <property type="component" value="Chromosome"/>
</dbReference>
<dbReference type="GO" id="GO:0005737">
    <property type="term" value="C:cytoplasm"/>
    <property type="evidence" value="ECO:0007669"/>
    <property type="project" value="UniProtKB-SubCell"/>
</dbReference>
<dbReference type="GO" id="GO:0009380">
    <property type="term" value="C:excinuclease repair complex"/>
    <property type="evidence" value="ECO:0000314"/>
    <property type="project" value="UniProtKB"/>
</dbReference>
<dbReference type="GO" id="GO:0005524">
    <property type="term" value="F:ATP binding"/>
    <property type="evidence" value="ECO:0007669"/>
    <property type="project" value="UniProtKB-UniRule"/>
</dbReference>
<dbReference type="GO" id="GO:0016887">
    <property type="term" value="F:ATP hydrolysis activity"/>
    <property type="evidence" value="ECO:0007669"/>
    <property type="project" value="InterPro"/>
</dbReference>
<dbReference type="GO" id="GO:0003677">
    <property type="term" value="F:DNA binding"/>
    <property type="evidence" value="ECO:0007669"/>
    <property type="project" value="UniProtKB-UniRule"/>
</dbReference>
<dbReference type="GO" id="GO:0009381">
    <property type="term" value="F:excinuclease ABC activity"/>
    <property type="evidence" value="ECO:0007669"/>
    <property type="project" value="UniProtKB-UniRule"/>
</dbReference>
<dbReference type="GO" id="GO:0042802">
    <property type="term" value="F:identical protein binding"/>
    <property type="evidence" value="ECO:0000353"/>
    <property type="project" value="IntAct"/>
</dbReference>
<dbReference type="GO" id="GO:0006289">
    <property type="term" value="P:nucleotide-excision repair"/>
    <property type="evidence" value="ECO:0000314"/>
    <property type="project" value="ComplexPortal"/>
</dbReference>
<dbReference type="GO" id="GO:0000715">
    <property type="term" value="P:nucleotide-excision repair, DNA damage recognition"/>
    <property type="evidence" value="ECO:0000314"/>
    <property type="project" value="ComplexPortal"/>
</dbReference>
<dbReference type="GO" id="GO:0006294">
    <property type="term" value="P:nucleotide-excision repair, preincision complex assembly"/>
    <property type="evidence" value="ECO:0000314"/>
    <property type="project" value="ComplexPortal"/>
</dbReference>
<dbReference type="GO" id="GO:0009314">
    <property type="term" value="P:response to radiation"/>
    <property type="evidence" value="ECO:0000315"/>
    <property type="project" value="EcoCyc"/>
</dbReference>
<dbReference type="GO" id="GO:0009432">
    <property type="term" value="P:SOS response"/>
    <property type="evidence" value="ECO:0007669"/>
    <property type="project" value="UniProtKB-UniRule"/>
</dbReference>
<dbReference type="CDD" id="cd17916">
    <property type="entry name" value="DEXHc_UvrB"/>
    <property type="match status" value="1"/>
</dbReference>
<dbReference type="CDD" id="cd18790">
    <property type="entry name" value="SF2_C_UvrB"/>
    <property type="match status" value="1"/>
</dbReference>
<dbReference type="FunFam" id="3.40.50.300:FF:000257">
    <property type="entry name" value="UvrABC system protein B"/>
    <property type="match status" value="1"/>
</dbReference>
<dbReference type="FunFam" id="3.40.50.300:FF:000401">
    <property type="entry name" value="UvrABC system protein B"/>
    <property type="match status" value="1"/>
</dbReference>
<dbReference type="FunFam" id="3.40.50.300:FF:000477">
    <property type="entry name" value="UvrABC system protein B"/>
    <property type="match status" value="1"/>
</dbReference>
<dbReference type="Gene3D" id="3.40.50.300">
    <property type="entry name" value="P-loop containing nucleotide triphosphate hydrolases"/>
    <property type="match status" value="3"/>
</dbReference>
<dbReference type="Gene3D" id="4.10.860.10">
    <property type="entry name" value="UVR domain"/>
    <property type="match status" value="1"/>
</dbReference>
<dbReference type="HAMAP" id="MF_00204">
    <property type="entry name" value="UvrB"/>
    <property type="match status" value="1"/>
</dbReference>
<dbReference type="InterPro" id="IPR006935">
    <property type="entry name" value="Helicase/UvrB_N"/>
</dbReference>
<dbReference type="InterPro" id="IPR014001">
    <property type="entry name" value="Helicase_ATP-bd"/>
</dbReference>
<dbReference type="InterPro" id="IPR001650">
    <property type="entry name" value="Helicase_C-like"/>
</dbReference>
<dbReference type="InterPro" id="IPR027417">
    <property type="entry name" value="P-loop_NTPase"/>
</dbReference>
<dbReference type="InterPro" id="IPR001943">
    <property type="entry name" value="UVR_dom"/>
</dbReference>
<dbReference type="InterPro" id="IPR036876">
    <property type="entry name" value="UVR_dom_sf"/>
</dbReference>
<dbReference type="InterPro" id="IPR004807">
    <property type="entry name" value="UvrB"/>
</dbReference>
<dbReference type="InterPro" id="IPR041471">
    <property type="entry name" value="UvrB_inter"/>
</dbReference>
<dbReference type="InterPro" id="IPR024759">
    <property type="entry name" value="UvrB_YAD/RRR_dom"/>
</dbReference>
<dbReference type="NCBIfam" id="NF003673">
    <property type="entry name" value="PRK05298.1"/>
    <property type="match status" value="1"/>
</dbReference>
<dbReference type="NCBIfam" id="TIGR00631">
    <property type="entry name" value="uvrb"/>
    <property type="match status" value="1"/>
</dbReference>
<dbReference type="PANTHER" id="PTHR24029">
    <property type="entry name" value="UVRABC SYSTEM PROTEIN B"/>
    <property type="match status" value="1"/>
</dbReference>
<dbReference type="PANTHER" id="PTHR24029:SF0">
    <property type="entry name" value="UVRABC SYSTEM PROTEIN B"/>
    <property type="match status" value="1"/>
</dbReference>
<dbReference type="Pfam" id="PF00271">
    <property type="entry name" value="Helicase_C"/>
    <property type="match status" value="1"/>
</dbReference>
<dbReference type="Pfam" id="PF04851">
    <property type="entry name" value="ResIII"/>
    <property type="match status" value="1"/>
</dbReference>
<dbReference type="Pfam" id="PF02151">
    <property type="entry name" value="UVR"/>
    <property type="match status" value="1"/>
</dbReference>
<dbReference type="Pfam" id="PF12344">
    <property type="entry name" value="UvrB"/>
    <property type="match status" value="1"/>
</dbReference>
<dbReference type="Pfam" id="PF17757">
    <property type="entry name" value="UvrB_inter"/>
    <property type="match status" value="1"/>
</dbReference>
<dbReference type="SMART" id="SM00487">
    <property type="entry name" value="DEXDc"/>
    <property type="match status" value="1"/>
</dbReference>
<dbReference type="SMART" id="SM00490">
    <property type="entry name" value="HELICc"/>
    <property type="match status" value="1"/>
</dbReference>
<dbReference type="SUPFAM" id="SSF46600">
    <property type="entry name" value="C-terminal UvrC-binding domain of UvrB"/>
    <property type="match status" value="1"/>
</dbReference>
<dbReference type="SUPFAM" id="SSF52540">
    <property type="entry name" value="P-loop containing nucleoside triphosphate hydrolases"/>
    <property type="match status" value="2"/>
</dbReference>
<dbReference type="PROSITE" id="PS51192">
    <property type="entry name" value="HELICASE_ATP_BIND_1"/>
    <property type="match status" value="1"/>
</dbReference>
<dbReference type="PROSITE" id="PS51194">
    <property type="entry name" value="HELICASE_CTER"/>
    <property type="match status" value="1"/>
</dbReference>
<dbReference type="PROSITE" id="PS50151">
    <property type="entry name" value="UVR"/>
    <property type="match status" value="1"/>
</dbReference>
<organism>
    <name type="scientific">Escherichia coli (strain K12)</name>
    <dbReference type="NCBI Taxonomy" id="83333"/>
    <lineage>
        <taxon>Bacteria</taxon>
        <taxon>Pseudomonadati</taxon>
        <taxon>Pseudomonadota</taxon>
        <taxon>Gammaproteobacteria</taxon>
        <taxon>Enterobacterales</taxon>
        <taxon>Enterobacteriaceae</taxon>
        <taxon>Escherichia</taxon>
    </lineage>
</organism>
<keyword id="KW-0002">3D-structure</keyword>
<keyword id="KW-0067">ATP-binding</keyword>
<keyword id="KW-0963">Cytoplasm</keyword>
<keyword id="KW-0903">Direct protein sequencing</keyword>
<keyword id="KW-0227">DNA damage</keyword>
<keyword id="KW-0228">DNA excision</keyword>
<keyword id="KW-0234">DNA repair</keyword>
<keyword id="KW-0267">Excision nuclease</keyword>
<keyword id="KW-0547">Nucleotide-binding</keyword>
<keyword id="KW-1185">Reference proteome</keyword>
<keyword id="KW-0742">SOS response</keyword>